<evidence type="ECO:0000250" key="1">
    <source>
        <dbReference type="UniProtKB" id="Q00202"/>
    </source>
</evidence>
<evidence type="ECO:0000255" key="2">
    <source>
        <dbReference type="PROSITE-ProRule" id="PRU00042"/>
    </source>
</evidence>
<evidence type="ECO:0000256" key="3">
    <source>
        <dbReference type="SAM" id="MobiDB-lite"/>
    </source>
</evidence>
<evidence type="ECO:0000269" key="4">
    <source>
    </source>
</evidence>
<evidence type="ECO:0000269" key="5">
    <source>
    </source>
</evidence>
<evidence type="ECO:0000269" key="6">
    <source>
    </source>
</evidence>
<evidence type="ECO:0000269" key="7">
    <source>
    </source>
</evidence>
<evidence type="ECO:0000269" key="8">
    <source>
    </source>
</evidence>
<evidence type="ECO:0000305" key="9"/>
<evidence type="ECO:0000305" key="10">
    <source>
    </source>
</evidence>
<reference key="1">
    <citation type="journal article" date="2005" name="Nature">
        <title>Genomic sequence of the pathogenic and allergenic filamentous fungus Aspergillus fumigatus.</title>
        <authorList>
            <person name="Nierman W.C."/>
            <person name="Pain A."/>
            <person name="Anderson M.J."/>
            <person name="Wortman J.R."/>
            <person name="Kim H.S."/>
            <person name="Arroyo J."/>
            <person name="Berriman M."/>
            <person name="Abe K."/>
            <person name="Archer D.B."/>
            <person name="Bermejo C."/>
            <person name="Bennett J.W."/>
            <person name="Bowyer P."/>
            <person name="Chen D."/>
            <person name="Collins M."/>
            <person name="Coulsen R."/>
            <person name="Davies R."/>
            <person name="Dyer P.S."/>
            <person name="Farman M.L."/>
            <person name="Fedorova N."/>
            <person name="Fedorova N.D."/>
            <person name="Feldblyum T.V."/>
            <person name="Fischer R."/>
            <person name="Fosker N."/>
            <person name="Fraser A."/>
            <person name="Garcia J.L."/>
            <person name="Garcia M.J."/>
            <person name="Goble A."/>
            <person name="Goldman G.H."/>
            <person name="Gomi K."/>
            <person name="Griffith-Jones S."/>
            <person name="Gwilliam R."/>
            <person name="Haas B.J."/>
            <person name="Haas H."/>
            <person name="Harris D.E."/>
            <person name="Horiuchi H."/>
            <person name="Huang J."/>
            <person name="Humphray S."/>
            <person name="Jimenez J."/>
            <person name="Keller N."/>
            <person name="Khouri H."/>
            <person name="Kitamoto K."/>
            <person name="Kobayashi T."/>
            <person name="Konzack S."/>
            <person name="Kulkarni R."/>
            <person name="Kumagai T."/>
            <person name="Lafton A."/>
            <person name="Latge J.-P."/>
            <person name="Li W."/>
            <person name="Lord A."/>
            <person name="Lu C."/>
            <person name="Majoros W.H."/>
            <person name="May G.S."/>
            <person name="Miller B.L."/>
            <person name="Mohamoud Y."/>
            <person name="Molina M."/>
            <person name="Monod M."/>
            <person name="Mouyna I."/>
            <person name="Mulligan S."/>
            <person name="Murphy L.D."/>
            <person name="O'Neil S."/>
            <person name="Paulsen I."/>
            <person name="Penalva M.A."/>
            <person name="Pertea M."/>
            <person name="Price C."/>
            <person name="Pritchard B.L."/>
            <person name="Quail M.A."/>
            <person name="Rabbinowitsch E."/>
            <person name="Rawlins N."/>
            <person name="Rajandream M.A."/>
            <person name="Reichard U."/>
            <person name="Renauld H."/>
            <person name="Robson G.D."/>
            <person name="Rodriguez de Cordoba S."/>
            <person name="Rodriguez-Pena J.M."/>
            <person name="Ronning C.M."/>
            <person name="Rutter S."/>
            <person name="Salzberg S.L."/>
            <person name="Sanchez M."/>
            <person name="Sanchez-Ferrero J.C."/>
            <person name="Saunders D."/>
            <person name="Seeger K."/>
            <person name="Squares R."/>
            <person name="Squares S."/>
            <person name="Takeuchi M."/>
            <person name="Tekaia F."/>
            <person name="Turner G."/>
            <person name="Vazquez de Aldana C.R."/>
            <person name="Weidman J."/>
            <person name="White O."/>
            <person name="Woodward J.R."/>
            <person name="Yu J.-H."/>
            <person name="Fraser C.M."/>
            <person name="Galagan J.E."/>
            <person name="Asai K."/>
            <person name="Machida M."/>
            <person name="Hall N."/>
            <person name="Barrell B.G."/>
            <person name="Denning D.W."/>
        </authorList>
    </citation>
    <scope>NUCLEOTIDE SEQUENCE [LARGE SCALE GENOMIC DNA]</scope>
    <source>
        <strain>ATCC MYA-4609 / CBS 101355 / FGSC A1100 / Af293</strain>
    </source>
</reference>
<reference key="2">
    <citation type="submission" date="2001-11" db="EMBL/GenBank/DDBJ databases">
        <title>Putative PacC zinc finger-encoding region of Aspergillus fumigatus Fresenius.</title>
        <authorList>
            <person name="Pocas-Fonseca M.J."/>
            <person name="Neves E.O."/>
            <person name="Azevedo M.O."/>
            <person name="Kubicek C.P."/>
        </authorList>
    </citation>
    <scope>NUCLEOTIDE SEQUENCE [GENOMIC DNA] OF 99-167</scope>
</reference>
<reference key="3">
    <citation type="journal article" date="2009" name="Int. Microbiol.">
        <title>Repression of the acid ZrfA/ZrfB zinc-uptake system of Aspergillus fumigatus mediated by PacC under neutral, zinc-limiting conditions.</title>
        <authorList>
            <person name="Amich J."/>
            <person name="Leal F."/>
            <person name="Calera J.A."/>
        </authorList>
    </citation>
    <scope>FUNCTION</scope>
</reference>
<reference key="4">
    <citation type="journal article" date="2014" name="PLoS Pathog.">
        <title>The pH-responsive PacC transcription factor of Aspergillus fumigatus governs epithelial entry and tissue invasion during pulmonary aspergillosis.</title>
        <authorList>
            <person name="Bertuzzi M."/>
            <person name="Schrettl M."/>
            <person name="Alcazar-Fuoli L."/>
            <person name="Cairns T.C."/>
            <person name="Munoz A."/>
            <person name="Walker L.A."/>
            <person name="Herbst S."/>
            <person name="Safari M."/>
            <person name="Cheverton A.M."/>
            <person name="Chen D."/>
            <person name="Liu H."/>
            <person name="Saijo S."/>
            <person name="Fedorova N.D."/>
            <person name="Armstrong-James D."/>
            <person name="Munro C.A."/>
            <person name="Read N.D."/>
            <person name="Filler S.G."/>
            <person name="Espeso E.A."/>
            <person name="Nierman W.C."/>
            <person name="Haas H."/>
            <person name="Bignell E.M."/>
        </authorList>
    </citation>
    <scope>FUNCTION</scope>
    <scope>DISRUPTION PHENOTYPE</scope>
</reference>
<reference key="5">
    <citation type="journal article" date="2018" name="Antimicrob. Agents Chemother.">
        <title>Mechanistic basis of pH-dependent 5-flucytosine resistance in Aspergillus fumigatus.</title>
        <authorList>
            <person name="Gsaller F."/>
            <person name="Furukawa T."/>
            <person name="Carr P.D."/>
            <person name="Rash B."/>
            <person name="Joechl C."/>
            <person name="Bertuzzi M."/>
            <person name="Bignell E.M."/>
            <person name="Bromley M.J."/>
        </authorList>
    </citation>
    <scope>FUNCTION</scope>
</reference>
<reference key="6">
    <citation type="journal article" date="2022" name="Environ. Microbiol.">
        <title>Regulation of zinc homeostatic genes by environmental pH in the filamentous fungus Aspergillus fumigatus.</title>
        <authorList>
            <person name="Toledo H."/>
            <person name="Sanchez C.I."/>
            <person name="Marin L."/>
            <person name="Amich J."/>
            <person name="Calera J.A."/>
        </authorList>
    </citation>
    <scope>FUNCTION</scope>
    <scope>PROTEOLYTIC PROCESSING</scope>
</reference>
<reference key="7">
    <citation type="journal article" date="2022" name="Front. Cell. Infect. Microbiol.">
        <title>Distinct Cohorts of Aspergillus fumigatus Transcription Factors Are Required for Epithelial Damage Occurring via Contact- or Soluble Effector-Mediated Mechanisms.</title>
        <authorList>
            <person name="Rahman S."/>
            <person name="van Rhijn N."/>
            <person name="Papastamoulis P."/>
            <person name="Thomson D.D."/>
            <person name="Carter Z."/>
            <person name="Fortune-Grant R."/>
            <person name="Rattray M."/>
            <person name="Bromley M.J."/>
            <person name="Bignell E."/>
        </authorList>
    </citation>
    <scope>FUNCTION</scope>
    <scope>DISRUPTION PHENOTYPE</scope>
</reference>
<feature type="chain" id="PRO_0000046819" description="pH-response transcription factor pacC/RIM101">
    <location>
        <begin position="1"/>
        <end position="676"/>
    </location>
</feature>
<feature type="zinc finger region" description="C2H2-type 1" evidence="2">
    <location>
        <begin position="80"/>
        <end position="105"/>
    </location>
</feature>
<feature type="zinc finger region" description="C2H2-type 2" evidence="2">
    <location>
        <begin position="116"/>
        <end position="140"/>
    </location>
</feature>
<feature type="zinc finger region" description="C2H2-type 3" evidence="2">
    <location>
        <begin position="146"/>
        <end position="168"/>
    </location>
</feature>
<feature type="region of interest" description="Disordered" evidence="3">
    <location>
        <begin position="1"/>
        <end position="55"/>
    </location>
</feature>
<feature type="region of interest" description="Disordered" evidence="3">
    <location>
        <begin position="380"/>
        <end position="545"/>
    </location>
</feature>
<feature type="region of interest" description="Disordered" evidence="3">
    <location>
        <begin position="605"/>
        <end position="676"/>
    </location>
</feature>
<feature type="short sequence motif" description="YPX[LI] motif 1">
    <location>
        <begin position="459"/>
        <end position="462"/>
    </location>
</feature>
<feature type="short sequence motif" description="YPX[LI] motif 2">
    <location>
        <begin position="660"/>
        <end position="663"/>
    </location>
</feature>
<feature type="compositionally biased region" description="Low complexity" evidence="3">
    <location>
        <begin position="7"/>
        <end position="23"/>
    </location>
</feature>
<feature type="compositionally biased region" description="Low complexity" evidence="3">
    <location>
        <begin position="32"/>
        <end position="55"/>
    </location>
</feature>
<feature type="compositionally biased region" description="Low complexity" evidence="3">
    <location>
        <begin position="394"/>
        <end position="413"/>
    </location>
</feature>
<feature type="compositionally biased region" description="Polar residues" evidence="3">
    <location>
        <begin position="425"/>
        <end position="445"/>
    </location>
</feature>
<feature type="compositionally biased region" description="Low complexity" evidence="3">
    <location>
        <begin position="476"/>
        <end position="486"/>
    </location>
</feature>
<feature type="compositionally biased region" description="Basic and acidic residues" evidence="3">
    <location>
        <begin position="506"/>
        <end position="531"/>
    </location>
</feature>
<feature type="compositionally biased region" description="Basic and acidic residues" evidence="3">
    <location>
        <begin position="605"/>
        <end position="615"/>
    </location>
</feature>
<feature type="compositionally biased region" description="Basic and acidic residues" evidence="3">
    <location>
        <begin position="623"/>
        <end position="640"/>
    </location>
</feature>
<feature type="sequence conflict" description="In Ref. 2; AAL47849." evidence="9" ref="2">
    <original>D</original>
    <variation>E</variation>
    <location>
        <position position="99"/>
    </location>
</feature>
<feature type="sequence conflict" description="In Ref. 2; AAL47849." evidence="9" ref="2">
    <original>I</original>
    <variation>V</variation>
    <location>
        <position position="101"/>
    </location>
</feature>
<feature type="sequence conflict" description="In Ref. 2; AAL47849." evidence="9" ref="2">
    <original>K</original>
    <variation>R</variation>
    <location>
        <position position="147"/>
    </location>
</feature>
<feature type="sequence conflict" description="In Ref. 2; AAL47849." evidence="9" ref="2">
    <original>T</original>
    <variation>N</variation>
    <location>
        <position position="167"/>
    </location>
</feature>
<gene>
    <name type="primary">pacC</name>
    <name type="ORF">AFUA_3G11970</name>
</gene>
<protein>
    <recommendedName>
        <fullName>pH-response transcription factor pacC/RIM101</fullName>
    </recommendedName>
</protein>
<organism>
    <name type="scientific">Aspergillus fumigatus (strain ATCC MYA-4609 / CBS 101355 / FGSC A1100 / Af293)</name>
    <name type="common">Neosartorya fumigata</name>
    <dbReference type="NCBI Taxonomy" id="330879"/>
    <lineage>
        <taxon>Eukaryota</taxon>
        <taxon>Fungi</taxon>
        <taxon>Dikarya</taxon>
        <taxon>Ascomycota</taxon>
        <taxon>Pezizomycotina</taxon>
        <taxon>Eurotiomycetes</taxon>
        <taxon>Eurotiomycetidae</taxon>
        <taxon>Eurotiales</taxon>
        <taxon>Aspergillaceae</taxon>
        <taxon>Aspergillus</taxon>
        <taxon>Aspergillus subgen. Fumigati</taxon>
    </lineage>
</organism>
<name>PACC_ASPFU</name>
<comment type="function">
    <text evidence="4 5 6 7 8">pH-responsive transcription factor required for epithelial invasion and pathogenicity in leukopenic mice (PubMed:25329394, PubMed:35982778). Modulates expression of genes encoding secreted enzymes, as well as cell wall and gliotoxin biosynthetic activities, during invasive aspergillosis (PubMed:25329394, PubMed:35982778). Plays a role in zinc homeostasis and represses the expression of the zinc-uptake transporters zrfA, zrfB and zrfC under zinc-limiting conditions in a pH-dependent manner (PubMed:19440982, PubMed:33687784). Binds to the pH response DNA consensus sequence 5'-GCCARG-3' or PR site in target genes promoters (PubMed:33687784). With the CCAAT binding complex (CBC), orchestrates 5-flucytosine (5FC) resistance via negative regulation of the gene encoding the purine-cytosine transporter fcyB (PubMed:29610197).</text>
</comment>
<comment type="subcellular location">
    <subcellularLocation>
        <location evidence="1">Cytoplasm</location>
    </subcellularLocation>
    <subcellularLocation>
        <location evidence="1">Nucleus</location>
    </subcellularLocation>
    <text evidence="1">Cytoplasmic at acidic ambient pH, and nuclear in its processed form at alkaline ambient pH.</text>
</comment>
<comment type="PTM">
    <text evidence="7 10">Activated by C-terminal proteolytic cleavage by signaling protease (probably palB/RIM13) at neutral to alkaline ambient pH (PubMed:33687784). Two consecutive proteolytic steps are required for pacC activation. The primary step is pH dependent, mediated by the putative calpain protease palB, to yield a 53-kDa form, pacC53. PacC53 is a transient intermediate, committed to proteolysis by the proteasome, generating a 27-kDa form of pacC. The truncated form pacC27, containing the DNA-binding region, is required for correct regulation of acid- and alkaline-expressed genes in response to alkaline pH (Probable).</text>
</comment>
<comment type="disruption phenotype">
    <text evidence="5 8">Leads to defect in both contact-mediated epithelial entry and protease expression, and significantly attenuated for pathogenicity in leukopenic mice (PubMed:25329394, PubMed:35982778). Results in hypersensitivity to cell wall active drugs such as caspofungin (PubMed:25329394).</text>
</comment>
<comment type="similarity">
    <text evidence="9">Belongs to the pacC/RIM101 family.</text>
</comment>
<proteinExistence type="evidence at protein level"/>
<dbReference type="EMBL" id="AAHF01000002">
    <property type="protein sequence ID" value="EAL92386.1"/>
    <property type="molecule type" value="Genomic_DNA"/>
</dbReference>
<dbReference type="EMBL" id="AF451286">
    <property type="protein sequence ID" value="AAL47849.1"/>
    <property type="molecule type" value="Genomic_DNA"/>
</dbReference>
<dbReference type="RefSeq" id="XP_754424.1">
    <property type="nucleotide sequence ID" value="XM_749331.1"/>
</dbReference>
<dbReference type="STRING" id="330879.Q4WY67"/>
<dbReference type="EnsemblFungi" id="EAL92386">
    <property type="protein sequence ID" value="EAL92386"/>
    <property type="gene ID" value="AFUA_3G11970"/>
</dbReference>
<dbReference type="GeneID" id="3511803"/>
<dbReference type="KEGG" id="afm:AFUA_3G11970"/>
<dbReference type="VEuPathDB" id="FungiDB:Afu3g11970"/>
<dbReference type="eggNOG" id="KOG1721">
    <property type="taxonomic scope" value="Eukaryota"/>
</dbReference>
<dbReference type="HOGENOM" id="CLU_012842_1_0_1"/>
<dbReference type="InParanoid" id="Q4WY67"/>
<dbReference type="OMA" id="QWGNCRT"/>
<dbReference type="OrthoDB" id="6155966at2759"/>
<dbReference type="PHI-base" id="PHI:3235"/>
<dbReference type="Proteomes" id="UP000002530">
    <property type="component" value="Chromosome 3"/>
</dbReference>
<dbReference type="GO" id="GO:0005737">
    <property type="term" value="C:cytoplasm"/>
    <property type="evidence" value="ECO:0007669"/>
    <property type="project" value="UniProtKB-SubCell"/>
</dbReference>
<dbReference type="GO" id="GO:0005634">
    <property type="term" value="C:nucleus"/>
    <property type="evidence" value="ECO:0000318"/>
    <property type="project" value="GO_Central"/>
</dbReference>
<dbReference type="GO" id="GO:0043565">
    <property type="term" value="F:sequence-specific DNA binding"/>
    <property type="evidence" value="ECO:0000314"/>
    <property type="project" value="AspGD"/>
</dbReference>
<dbReference type="GO" id="GO:0008270">
    <property type="term" value="F:zinc ion binding"/>
    <property type="evidence" value="ECO:0007669"/>
    <property type="project" value="UniProtKB-KW"/>
</dbReference>
<dbReference type="GO" id="GO:0071469">
    <property type="term" value="P:cellular response to alkaline pH"/>
    <property type="evidence" value="ECO:0000315"/>
    <property type="project" value="AspGD"/>
</dbReference>
<dbReference type="GO" id="GO:0045944">
    <property type="term" value="P:positive regulation of transcription by RNA polymerase II"/>
    <property type="evidence" value="ECO:0000318"/>
    <property type="project" value="GO_Central"/>
</dbReference>
<dbReference type="FunFam" id="3.30.160.60:FF:000993">
    <property type="entry name" value="pH-response transcription factor pacC/RIM101"/>
    <property type="match status" value="1"/>
</dbReference>
<dbReference type="FunFam" id="3.30.160.60:FF:001369">
    <property type="entry name" value="pH-response transcription factor pacC/RIM101"/>
    <property type="match status" value="1"/>
</dbReference>
<dbReference type="Gene3D" id="3.30.160.60">
    <property type="entry name" value="Classic Zinc Finger"/>
    <property type="match status" value="2"/>
</dbReference>
<dbReference type="InterPro" id="IPR050806">
    <property type="entry name" value="pacC/RIM101"/>
</dbReference>
<dbReference type="InterPro" id="IPR036236">
    <property type="entry name" value="Znf_C2H2_sf"/>
</dbReference>
<dbReference type="InterPro" id="IPR013087">
    <property type="entry name" value="Znf_C2H2_type"/>
</dbReference>
<dbReference type="PANTHER" id="PTHR47257">
    <property type="entry name" value="PH-RESPONSE TRANSCRIPTION FACTOR PACC/RIM101"/>
    <property type="match status" value="1"/>
</dbReference>
<dbReference type="PANTHER" id="PTHR47257:SF1">
    <property type="entry name" value="PH-RESPONSE TRANSCRIPTION FACTOR PACC_RIM101"/>
    <property type="match status" value="1"/>
</dbReference>
<dbReference type="SMART" id="SM00355">
    <property type="entry name" value="ZnF_C2H2"/>
    <property type="match status" value="3"/>
</dbReference>
<dbReference type="SUPFAM" id="SSF57667">
    <property type="entry name" value="beta-beta-alpha zinc fingers"/>
    <property type="match status" value="2"/>
</dbReference>
<dbReference type="PROSITE" id="PS00028">
    <property type="entry name" value="ZINC_FINGER_C2H2_1"/>
    <property type="match status" value="2"/>
</dbReference>
<dbReference type="PROSITE" id="PS50157">
    <property type="entry name" value="ZINC_FINGER_C2H2_2"/>
    <property type="match status" value="2"/>
</dbReference>
<sequence>MSEHQDTATNNNTTASPSATAAPMPAPISQEQPSSQPAATTPAPVSTSTPPASVTATAAAATAAVSAPQANGTPPSDEQLSCLWQGCSEKCPSAEALYDHICERHVGRKSTNNLNLTCQWGSCRTTTVKRDHITSHIRVHVPLKPHKCEFCGKAFKRPQDLKKHVKTHADDSVLVRSPEPGARNPDMMFHGAGKGYAAAAHYFEPSLNAVPSQGYAHGAPQYYSSHPPHQPSNPSYGNVYYALNHGHDGHASYESKKRGYDALNEFFGDLKRRQFDLHSYAAVGQRLLGLQNLSLPILTGGPLPEYQPMPAPVAVGGGYGPGGHGAPVYHLPPMSNIRTKNDLINIDQFLQQMQDTIYENDDHVAAAGVAQPGAHYVHGGMSYRTTHSPPTQLPPSHAVATTSASTSMSNPATHSPPTGTPALTPPSSAQSYTSARSPISISSAHRVSPPHHDGGSGMYPRLPSTTMADSLAGGYPTASSAAPPSTLSGIFDDDRRRYTGGTLQRARPEERRPSIQMDTSHDGKEDGERTPTGKARSSGSDSPVRISANLIDPALHSSSPSDAEAALRTAQAATEVADRADSQWVEKVRLLEYLRSYIASRLERGEYDSDSDDHASAAASPVIKHDGHMDGVESSHKPITAEETSAPPAAKAESNHGVMYPTLHGLDGDEDTKMHH</sequence>
<keyword id="KW-0010">Activator</keyword>
<keyword id="KW-0963">Cytoplasm</keyword>
<keyword id="KW-0238">DNA-binding</keyword>
<keyword id="KW-0479">Metal-binding</keyword>
<keyword id="KW-0539">Nucleus</keyword>
<keyword id="KW-1185">Reference proteome</keyword>
<keyword id="KW-0677">Repeat</keyword>
<keyword id="KW-0678">Repressor</keyword>
<keyword id="KW-0804">Transcription</keyword>
<keyword id="KW-0805">Transcription regulation</keyword>
<keyword id="KW-0843">Virulence</keyword>
<keyword id="KW-0862">Zinc</keyword>
<keyword id="KW-0863">Zinc-finger</keyword>
<accession>Q4WY67</accession>
<accession>Q8X196</accession>